<name>ACP_RICCN</name>
<evidence type="ECO:0000255" key="1">
    <source>
        <dbReference type="HAMAP-Rule" id="MF_01217"/>
    </source>
</evidence>
<evidence type="ECO:0000255" key="2">
    <source>
        <dbReference type="PROSITE-ProRule" id="PRU00258"/>
    </source>
</evidence>
<reference key="1">
    <citation type="journal article" date="2001" name="Science">
        <title>Mechanisms of evolution in Rickettsia conorii and R. prowazekii.</title>
        <authorList>
            <person name="Ogata H."/>
            <person name="Audic S."/>
            <person name="Renesto-Audiffren P."/>
            <person name="Fournier P.-E."/>
            <person name="Barbe V."/>
            <person name="Samson D."/>
            <person name="Roux V."/>
            <person name="Cossart P."/>
            <person name="Weissenbach J."/>
            <person name="Claverie J.-M."/>
            <person name="Raoult D."/>
        </authorList>
    </citation>
    <scope>NUCLEOTIDE SEQUENCE [LARGE SCALE GENOMIC DNA]</scope>
    <source>
        <strain>ATCC VR-613 / Malish 7</strain>
    </source>
</reference>
<proteinExistence type="inferred from homology"/>
<organism>
    <name type="scientific">Rickettsia conorii (strain ATCC VR-613 / Malish 7)</name>
    <dbReference type="NCBI Taxonomy" id="272944"/>
    <lineage>
        <taxon>Bacteria</taxon>
        <taxon>Pseudomonadati</taxon>
        <taxon>Pseudomonadota</taxon>
        <taxon>Alphaproteobacteria</taxon>
        <taxon>Rickettsiales</taxon>
        <taxon>Rickettsiaceae</taxon>
        <taxon>Rickettsieae</taxon>
        <taxon>Rickettsia</taxon>
        <taxon>spotted fever group</taxon>
    </lineage>
</organism>
<protein>
    <recommendedName>
        <fullName evidence="1">Acyl carrier protein</fullName>
        <shortName evidence="1">ACP</shortName>
    </recommendedName>
</protein>
<comment type="function">
    <text evidence="1">Carrier of the growing fatty acid chain in fatty acid biosynthesis.</text>
</comment>
<comment type="pathway">
    <text evidence="1">Lipid metabolism; fatty acid biosynthesis.</text>
</comment>
<comment type="subcellular location">
    <subcellularLocation>
        <location evidence="1">Cytoplasm</location>
    </subcellularLocation>
</comment>
<comment type="PTM">
    <text evidence="1">4'-phosphopantetheine is transferred from CoA to a specific serine of apo-ACP by AcpS. This modification is essential for activity because fatty acids are bound in thioester linkage to the sulfhydryl of the prosthetic group.</text>
</comment>
<comment type="similarity">
    <text evidence="1">Belongs to the acyl carrier protein (ACP) family.</text>
</comment>
<gene>
    <name evidence="1" type="primary">acpP</name>
    <name type="ordered locus">RC1185</name>
</gene>
<feature type="chain" id="PRO_0000180179" description="Acyl carrier protein">
    <location>
        <begin position="1"/>
        <end position="86"/>
    </location>
</feature>
<feature type="domain" description="Carrier" evidence="2">
    <location>
        <begin position="10"/>
        <end position="85"/>
    </location>
</feature>
<feature type="modified residue" description="O-(pantetheine 4'-phosphoryl)serine" evidence="2">
    <location>
        <position position="45"/>
    </location>
</feature>
<sequence>MEFKIMSTTDKIEQKVIEMVAEKLNKDKSIITTDSRFIEDLKADSLDTVELMMAIEVEYGIDIPDDEATKIKTVSDVIKYIKERQS</sequence>
<dbReference type="EMBL" id="AE006914">
    <property type="protein sequence ID" value="AAL03723.1"/>
    <property type="molecule type" value="Genomic_DNA"/>
</dbReference>
<dbReference type="PIR" id="A97848">
    <property type="entry name" value="A97848"/>
</dbReference>
<dbReference type="SMR" id="Q92GD8"/>
<dbReference type="KEGG" id="rco:RC1185"/>
<dbReference type="HOGENOM" id="CLU_108696_5_6_5"/>
<dbReference type="UniPathway" id="UPA00094"/>
<dbReference type="Proteomes" id="UP000000816">
    <property type="component" value="Chromosome"/>
</dbReference>
<dbReference type="GO" id="GO:0005829">
    <property type="term" value="C:cytosol"/>
    <property type="evidence" value="ECO:0007669"/>
    <property type="project" value="TreeGrafter"/>
</dbReference>
<dbReference type="GO" id="GO:0016020">
    <property type="term" value="C:membrane"/>
    <property type="evidence" value="ECO:0007669"/>
    <property type="project" value="GOC"/>
</dbReference>
<dbReference type="GO" id="GO:0000035">
    <property type="term" value="F:acyl binding"/>
    <property type="evidence" value="ECO:0007669"/>
    <property type="project" value="TreeGrafter"/>
</dbReference>
<dbReference type="GO" id="GO:0000036">
    <property type="term" value="F:acyl carrier activity"/>
    <property type="evidence" value="ECO:0007669"/>
    <property type="project" value="UniProtKB-UniRule"/>
</dbReference>
<dbReference type="GO" id="GO:0009245">
    <property type="term" value="P:lipid A biosynthetic process"/>
    <property type="evidence" value="ECO:0007669"/>
    <property type="project" value="TreeGrafter"/>
</dbReference>
<dbReference type="Gene3D" id="1.10.1200.10">
    <property type="entry name" value="ACP-like"/>
    <property type="match status" value="1"/>
</dbReference>
<dbReference type="HAMAP" id="MF_01217">
    <property type="entry name" value="Acyl_carrier"/>
    <property type="match status" value="1"/>
</dbReference>
<dbReference type="InterPro" id="IPR003231">
    <property type="entry name" value="ACP"/>
</dbReference>
<dbReference type="InterPro" id="IPR036736">
    <property type="entry name" value="ACP-like_sf"/>
</dbReference>
<dbReference type="InterPro" id="IPR009081">
    <property type="entry name" value="PP-bd_ACP"/>
</dbReference>
<dbReference type="NCBIfam" id="TIGR00517">
    <property type="entry name" value="acyl_carrier"/>
    <property type="match status" value="1"/>
</dbReference>
<dbReference type="NCBIfam" id="NF002148">
    <property type="entry name" value="PRK00982.1-2"/>
    <property type="match status" value="1"/>
</dbReference>
<dbReference type="NCBIfam" id="NF002150">
    <property type="entry name" value="PRK00982.1-4"/>
    <property type="match status" value="1"/>
</dbReference>
<dbReference type="PANTHER" id="PTHR20863">
    <property type="entry name" value="ACYL CARRIER PROTEIN"/>
    <property type="match status" value="1"/>
</dbReference>
<dbReference type="PANTHER" id="PTHR20863:SF76">
    <property type="entry name" value="CARRIER DOMAIN-CONTAINING PROTEIN"/>
    <property type="match status" value="1"/>
</dbReference>
<dbReference type="Pfam" id="PF00550">
    <property type="entry name" value="PP-binding"/>
    <property type="match status" value="1"/>
</dbReference>
<dbReference type="SUPFAM" id="SSF47336">
    <property type="entry name" value="ACP-like"/>
    <property type="match status" value="1"/>
</dbReference>
<dbReference type="PROSITE" id="PS50075">
    <property type="entry name" value="CARRIER"/>
    <property type="match status" value="1"/>
</dbReference>
<keyword id="KW-0963">Cytoplasm</keyword>
<keyword id="KW-0275">Fatty acid biosynthesis</keyword>
<keyword id="KW-0276">Fatty acid metabolism</keyword>
<keyword id="KW-0444">Lipid biosynthesis</keyword>
<keyword id="KW-0443">Lipid metabolism</keyword>
<keyword id="KW-0596">Phosphopantetheine</keyword>
<keyword id="KW-0597">Phosphoprotein</keyword>
<accession>Q92GD8</accession>